<feature type="chain" id="PRO_1000118342" description="Acetylglutamate kinase">
    <location>
        <begin position="1"/>
        <end position="296"/>
    </location>
</feature>
<feature type="binding site" evidence="1">
    <location>
        <begin position="67"/>
        <end position="68"/>
    </location>
    <ligand>
        <name>substrate</name>
    </ligand>
</feature>
<feature type="binding site" evidence="1">
    <location>
        <position position="89"/>
    </location>
    <ligand>
        <name>substrate</name>
    </ligand>
</feature>
<feature type="binding site" evidence="1">
    <location>
        <position position="194"/>
    </location>
    <ligand>
        <name>substrate</name>
    </ligand>
</feature>
<feature type="site" description="Transition state stabilizer" evidence="1">
    <location>
        <position position="32"/>
    </location>
</feature>
<feature type="site" description="Transition state stabilizer" evidence="1">
    <location>
        <position position="254"/>
    </location>
</feature>
<dbReference type="EC" id="2.7.2.8" evidence="1"/>
<dbReference type="EMBL" id="CP001489">
    <property type="protein sequence ID" value="ACO02798.1"/>
    <property type="molecule type" value="Genomic_DNA"/>
</dbReference>
<dbReference type="RefSeq" id="WP_002965625.1">
    <property type="nucleotide sequence ID" value="NC_012442.1"/>
</dbReference>
<dbReference type="SMR" id="C0RMG5"/>
<dbReference type="GeneID" id="93015191"/>
<dbReference type="KEGG" id="bmi:BMEA_B1011"/>
<dbReference type="HOGENOM" id="CLU_053680_0_0_5"/>
<dbReference type="UniPathway" id="UPA00068">
    <property type="reaction ID" value="UER00107"/>
</dbReference>
<dbReference type="Proteomes" id="UP000001748">
    <property type="component" value="Chromosome II"/>
</dbReference>
<dbReference type="GO" id="GO:0005737">
    <property type="term" value="C:cytoplasm"/>
    <property type="evidence" value="ECO:0007669"/>
    <property type="project" value="UniProtKB-SubCell"/>
</dbReference>
<dbReference type="GO" id="GO:0003991">
    <property type="term" value="F:acetylglutamate kinase activity"/>
    <property type="evidence" value="ECO:0007669"/>
    <property type="project" value="UniProtKB-UniRule"/>
</dbReference>
<dbReference type="GO" id="GO:0005524">
    <property type="term" value="F:ATP binding"/>
    <property type="evidence" value="ECO:0007669"/>
    <property type="project" value="UniProtKB-UniRule"/>
</dbReference>
<dbReference type="GO" id="GO:0042450">
    <property type="term" value="P:arginine biosynthetic process via ornithine"/>
    <property type="evidence" value="ECO:0007669"/>
    <property type="project" value="UniProtKB-UniRule"/>
</dbReference>
<dbReference type="GO" id="GO:0006526">
    <property type="term" value="P:L-arginine biosynthetic process"/>
    <property type="evidence" value="ECO:0007669"/>
    <property type="project" value="UniProtKB-UniPathway"/>
</dbReference>
<dbReference type="CDD" id="cd04250">
    <property type="entry name" value="AAK_NAGK-C"/>
    <property type="match status" value="1"/>
</dbReference>
<dbReference type="FunFam" id="3.40.1160.10:FF:000004">
    <property type="entry name" value="Acetylglutamate kinase"/>
    <property type="match status" value="1"/>
</dbReference>
<dbReference type="Gene3D" id="3.40.1160.10">
    <property type="entry name" value="Acetylglutamate kinase-like"/>
    <property type="match status" value="1"/>
</dbReference>
<dbReference type="HAMAP" id="MF_00082">
    <property type="entry name" value="ArgB"/>
    <property type="match status" value="1"/>
</dbReference>
<dbReference type="InterPro" id="IPR036393">
    <property type="entry name" value="AceGlu_kinase-like_sf"/>
</dbReference>
<dbReference type="InterPro" id="IPR004662">
    <property type="entry name" value="AcgluKinase_fam"/>
</dbReference>
<dbReference type="InterPro" id="IPR037528">
    <property type="entry name" value="ArgB"/>
</dbReference>
<dbReference type="InterPro" id="IPR001048">
    <property type="entry name" value="Asp/Glu/Uridylate_kinase"/>
</dbReference>
<dbReference type="InterPro" id="IPR041727">
    <property type="entry name" value="NAGK-C"/>
</dbReference>
<dbReference type="NCBIfam" id="TIGR00761">
    <property type="entry name" value="argB"/>
    <property type="match status" value="1"/>
</dbReference>
<dbReference type="PANTHER" id="PTHR23342">
    <property type="entry name" value="N-ACETYLGLUTAMATE SYNTHASE"/>
    <property type="match status" value="1"/>
</dbReference>
<dbReference type="PANTHER" id="PTHR23342:SF0">
    <property type="entry name" value="N-ACETYLGLUTAMATE SYNTHASE, MITOCHONDRIAL"/>
    <property type="match status" value="1"/>
</dbReference>
<dbReference type="Pfam" id="PF00696">
    <property type="entry name" value="AA_kinase"/>
    <property type="match status" value="1"/>
</dbReference>
<dbReference type="PIRSF" id="PIRSF000728">
    <property type="entry name" value="NAGK"/>
    <property type="match status" value="1"/>
</dbReference>
<dbReference type="SUPFAM" id="SSF53633">
    <property type="entry name" value="Carbamate kinase-like"/>
    <property type="match status" value="1"/>
</dbReference>
<reference key="1">
    <citation type="submission" date="2009-03" db="EMBL/GenBank/DDBJ databases">
        <title>Brucella melitensis ATCC 23457 whole genome shotgun sequencing project.</title>
        <authorList>
            <person name="Setubal J.C."/>
            <person name="Boyle S."/>
            <person name="Crasta O.R."/>
            <person name="Gillespie J.J."/>
            <person name="Kenyon R.W."/>
            <person name="Lu J."/>
            <person name="Mane S."/>
            <person name="Nagrani S."/>
            <person name="Shallom J.M."/>
            <person name="Shallom S."/>
            <person name="Shukla M."/>
            <person name="Snyder E.E."/>
            <person name="Sobral B.W."/>
            <person name="Wattam A.R."/>
            <person name="Will R."/>
            <person name="Williams K."/>
            <person name="Yoo H."/>
            <person name="Munk C."/>
            <person name="Tapia R."/>
            <person name="Han C."/>
            <person name="Detter J.C."/>
            <person name="Bruce D."/>
            <person name="Brettin T.S."/>
        </authorList>
    </citation>
    <scope>NUCLEOTIDE SEQUENCE [LARGE SCALE GENOMIC DNA]</scope>
    <source>
        <strain>ATCC 23457</strain>
    </source>
</reference>
<comment type="function">
    <text evidence="1">Catalyzes the ATP-dependent phosphorylation of N-acetyl-L-glutamate.</text>
</comment>
<comment type="catalytic activity">
    <reaction evidence="1">
        <text>N-acetyl-L-glutamate + ATP = N-acetyl-L-glutamyl 5-phosphate + ADP</text>
        <dbReference type="Rhea" id="RHEA:14629"/>
        <dbReference type="ChEBI" id="CHEBI:30616"/>
        <dbReference type="ChEBI" id="CHEBI:44337"/>
        <dbReference type="ChEBI" id="CHEBI:57936"/>
        <dbReference type="ChEBI" id="CHEBI:456216"/>
        <dbReference type="EC" id="2.7.2.8"/>
    </reaction>
</comment>
<comment type="pathway">
    <text evidence="1">Amino-acid biosynthesis; L-arginine biosynthesis; N(2)-acetyl-L-ornithine from L-glutamate: step 2/4.</text>
</comment>
<comment type="subcellular location">
    <subcellularLocation>
        <location evidence="1">Cytoplasm</location>
    </subcellularLocation>
</comment>
<comment type="similarity">
    <text evidence="1">Belongs to the acetylglutamate kinase family. ArgB subfamily.</text>
</comment>
<gene>
    <name evidence="1" type="primary">argB</name>
    <name type="ordered locus">BMEA_B1011</name>
</gene>
<sequence>MTTLENPEMQAQLLSAALPYMQRYENKHVVVKYGGHAMGNPELGKAFARDVALLKQSGVNPIVVHGGGPQIQAMLTKLGIESRFEGGLRVTDEKTVEVVEMVLAGSINKEIVALINAEGEWAIGLCGKDGNMVFAQKAHKTVIDPDSNIEKVLDLGFVGEPAEVDRTLLDLLARSEMIPVIAPVAPGRDGHTYNINADTFAGAIAGALAATRLLFLTNVPGVLDKDKKLIKELSVADAQALIRDGTISGGMIPKVETCIDAIRRGVEGVVILNGKTPHSVLLELFTEHGAGTLIVP</sequence>
<evidence type="ECO:0000255" key="1">
    <source>
        <dbReference type="HAMAP-Rule" id="MF_00082"/>
    </source>
</evidence>
<keyword id="KW-0028">Amino-acid biosynthesis</keyword>
<keyword id="KW-0055">Arginine biosynthesis</keyword>
<keyword id="KW-0067">ATP-binding</keyword>
<keyword id="KW-0963">Cytoplasm</keyword>
<keyword id="KW-0418">Kinase</keyword>
<keyword id="KW-0547">Nucleotide-binding</keyword>
<keyword id="KW-0808">Transferase</keyword>
<proteinExistence type="inferred from homology"/>
<organism>
    <name type="scientific">Brucella melitensis biotype 2 (strain ATCC 23457)</name>
    <dbReference type="NCBI Taxonomy" id="546272"/>
    <lineage>
        <taxon>Bacteria</taxon>
        <taxon>Pseudomonadati</taxon>
        <taxon>Pseudomonadota</taxon>
        <taxon>Alphaproteobacteria</taxon>
        <taxon>Hyphomicrobiales</taxon>
        <taxon>Brucellaceae</taxon>
        <taxon>Brucella/Ochrobactrum group</taxon>
        <taxon>Brucella</taxon>
    </lineage>
</organism>
<name>ARGB_BRUMB</name>
<protein>
    <recommendedName>
        <fullName evidence="1">Acetylglutamate kinase</fullName>
        <ecNumber evidence="1">2.7.2.8</ecNumber>
    </recommendedName>
    <alternativeName>
        <fullName evidence="1">N-acetyl-L-glutamate 5-phosphotransferase</fullName>
    </alternativeName>
    <alternativeName>
        <fullName evidence="1">NAG kinase</fullName>
        <shortName evidence="1">NAGK</shortName>
    </alternativeName>
</protein>
<accession>C0RMG5</accession>